<name>CMT2_ARATH</name>
<evidence type="ECO:0000250" key="1"/>
<evidence type="ECO:0000255" key="2">
    <source>
        <dbReference type="PROSITE-ProRule" id="PRU00053"/>
    </source>
</evidence>
<evidence type="ECO:0000255" key="3">
    <source>
        <dbReference type="PROSITE-ProRule" id="PRU00370"/>
    </source>
</evidence>
<evidence type="ECO:0000255" key="4">
    <source>
        <dbReference type="PROSITE-ProRule" id="PRU01016"/>
    </source>
</evidence>
<evidence type="ECO:0000256" key="5">
    <source>
        <dbReference type="SAM" id="MobiDB-lite"/>
    </source>
</evidence>
<evidence type="ECO:0000305" key="6"/>
<accession>Q94F87</accession>
<accession>O49415</accession>
<reference key="1">
    <citation type="journal article" date="2001" name="Genes Dev.">
        <title>Arabidopsis cmt3 chromomethylase mutations block non-CG methylation and silencing of an endogenous gene.</title>
        <authorList>
            <person name="Bartee L."/>
            <person name="Malagnac F."/>
            <person name="Bender J."/>
        </authorList>
    </citation>
    <scope>NUCLEOTIDE SEQUENCE [GENOMIC DNA]</scope>
    <source>
        <strain>cv. Wassilewskija</strain>
    </source>
</reference>
<reference key="2">
    <citation type="journal article" date="1999" name="Nature">
        <title>Sequence and analysis of chromosome 4 of the plant Arabidopsis thaliana.</title>
        <authorList>
            <person name="Mayer K.F.X."/>
            <person name="Schueller C."/>
            <person name="Wambutt R."/>
            <person name="Murphy G."/>
            <person name="Volckaert G."/>
            <person name="Pohl T."/>
            <person name="Duesterhoeft A."/>
            <person name="Stiekema W."/>
            <person name="Entian K.-D."/>
            <person name="Terryn N."/>
            <person name="Harris B."/>
            <person name="Ansorge W."/>
            <person name="Brandt P."/>
            <person name="Grivell L.A."/>
            <person name="Rieger M."/>
            <person name="Weichselgartner M."/>
            <person name="de Simone V."/>
            <person name="Obermaier B."/>
            <person name="Mache R."/>
            <person name="Mueller M."/>
            <person name="Kreis M."/>
            <person name="Delseny M."/>
            <person name="Puigdomenech P."/>
            <person name="Watson M."/>
            <person name="Schmidtheini T."/>
            <person name="Reichert B."/>
            <person name="Portetelle D."/>
            <person name="Perez-Alonso M."/>
            <person name="Boutry M."/>
            <person name="Bancroft I."/>
            <person name="Vos P."/>
            <person name="Hoheisel J."/>
            <person name="Zimmermann W."/>
            <person name="Wedler H."/>
            <person name="Ridley P."/>
            <person name="Langham S.-A."/>
            <person name="McCullagh B."/>
            <person name="Bilham L."/>
            <person name="Robben J."/>
            <person name="van der Schueren J."/>
            <person name="Grymonprez B."/>
            <person name="Chuang Y.-J."/>
            <person name="Vandenbussche F."/>
            <person name="Braeken M."/>
            <person name="Weltjens I."/>
            <person name="Voet M."/>
            <person name="Bastiaens I."/>
            <person name="Aert R."/>
            <person name="Defoor E."/>
            <person name="Weitzenegger T."/>
            <person name="Bothe G."/>
            <person name="Ramsperger U."/>
            <person name="Hilbert H."/>
            <person name="Braun M."/>
            <person name="Holzer E."/>
            <person name="Brandt A."/>
            <person name="Peters S."/>
            <person name="van Staveren M."/>
            <person name="Dirkse W."/>
            <person name="Mooijman P."/>
            <person name="Klein Lankhorst R."/>
            <person name="Rose M."/>
            <person name="Hauf J."/>
            <person name="Koetter P."/>
            <person name="Berneiser S."/>
            <person name="Hempel S."/>
            <person name="Feldpausch M."/>
            <person name="Lamberth S."/>
            <person name="Van den Daele H."/>
            <person name="De Keyser A."/>
            <person name="Buysshaert C."/>
            <person name="Gielen J."/>
            <person name="Villarroel R."/>
            <person name="De Clercq R."/>
            <person name="van Montagu M."/>
            <person name="Rogers J."/>
            <person name="Cronin A."/>
            <person name="Quail M.A."/>
            <person name="Bray-Allen S."/>
            <person name="Clark L."/>
            <person name="Doggett J."/>
            <person name="Hall S."/>
            <person name="Kay M."/>
            <person name="Lennard N."/>
            <person name="McLay K."/>
            <person name="Mayes R."/>
            <person name="Pettett A."/>
            <person name="Rajandream M.A."/>
            <person name="Lyne M."/>
            <person name="Benes V."/>
            <person name="Rechmann S."/>
            <person name="Borkova D."/>
            <person name="Bloecker H."/>
            <person name="Scharfe M."/>
            <person name="Grimm M."/>
            <person name="Loehnert T.-H."/>
            <person name="Dose S."/>
            <person name="de Haan M."/>
            <person name="Maarse A.C."/>
            <person name="Schaefer M."/>
            <person name="Mueller-Auer S."/>
            <person name="Gabel C."/>
            <person name="Fuchs M."/>
            <person name="Fartmann B."/>
            <person name="Granderath K."/>
            <person name="Dauner D."/>
            <person name="Herzl A."/>
            <person name="Neumann S."/>
            <person name="Argiriou A."/>
            <person name="Vitale D."/>
            <person name="Liguori R."/>
            <person name="Piravandi E."/>
            <person name="Massenet O."/>
            <person name="Quigley F."/>
            <person name="Clabauld G."/>
            <person name="Muendlein A."/>
            <person name="Felber R."/>
            <person name="Schnabl S."/>
            <person name="Hiller R."/>
            <person name="Schmidt W."/>
            <person name="Lecharny A."/>
            <person name="Aubourg S."/>
            <person name="Chefdor F."/>
            <person name="Cooke R."/>
            <person name="Berger C."/>
            <person name="Monfort A."/>
            <person name="Casacuberta E."/>
            <person name="Gibbons T."/>
            <person name="Weber N."/>
            <person name="Vandenbol M."/>
            <person name="Bargues M."/>
            <person name="Terol J."/>
            <person name="Torres A."/>
            <person name="Perez-Perez A."/>
            <person name="Purnelle B."/>
            <person name="Bent E."/>
            <person name="Johnson S."/>
            <person name="Tacon D."/>
            <person name="Jesse T."/>
            <person name="Heijnen L."/>
            <person name="Schwarz S."/>
            <person name="Scholler P."/>
            <person name="Heber S."/>
            <person name="Francs P."/>
            <person name="Bielke C."/>
            <person name="Frishman D."/>
            <person name="Haase D."/>
            <person name="Lemcke K."/>
            <person name="Mewes H.-W."/>
            <person name="Stocker S."/>
            <person name="Zaccaria P."/>
            <person name="Bevan M."/>
            <person name="Wilson R.K."/>
            <person name="de la Bastide M."/>
            <person name="Habermann K."/>
            <person name="Parnell L."/>
            <person name="Dedhia N."/>
            <person name="Gnoj L."/>
            <person name="Schutz K."/>
            <person name="Huang E."/>
            <person name="Spiegel L."/>
            <person name="Sekhon M."/>
            <person name="Murray J."/>
            <person name="Sheet P."/>
            <person name="Cordes M."/>
            <person name="Abu-Threideh J."/>
            <person name="Stoneking T."/>
            <person name="Kalicki J."/>
            <person name="Graves T."/>
            <person name="Harmon G."/>
            <person name="Edwards J."/>
            <person name="Latreille P."/>
            <person name="Courtney L."/>
            <person name="Cloud J."/>
            <person name="Abbott A."/>
            <person name="Scott K."/>
            <person name="Johnson D."/>
            <person name="Minx P."/>
            <person name="Bentley D."/>
            <person name="Fulton B."/>
            <person name="Miller N."/>
            <person name="Greco T."/>
            <person name="Kemp K."/>
            <person name="Kramer J."/>
            <person name="Fulton L."/>
            <person name="Mardis E."/>
            <person name="Dante M."/>
            <person name="Pepin K."/>
            <person name="Hillier L.W."/>
            <person name="Nelson J."/>
            <person name="Spieth J."/>
            <person name="Ryan E."/>
            <person name="Andrews S."/>
            <person name="Geisel C."/>
            <person name="Layman D."/>
            <person name="Du H."/>
            <person name="Ali J."/>
            <person name="Berghoff A."/>
            <person name="Jones K."/>
            <person name="Drone K."/>
            <person name="Cotton M."/>
            <person name="Joshu C."/>
            <person name="Antonoiu B."/>
            <person name="Zidanic M."/>
            <person name="Strong C."/>
            <person name="Sun H."/>
            <person name="Lamar B."/>
            <person name="Yordan C."/>
            <person name="Ma P."/>
            <person name="Zhong J."/>
            <person name="Preston R."/>
            <person name="Vil D."/>
            <person name="Shekher M."/>
            <person name="Matero A."/>
            <person name="Shah R."/>
            <person name="Swaby I.K."/>
            <person name="O'Shaughnessy A."/>
            <person name="Rodriguez M."/>
            <person name="Hoffman J."/>
            <person name="Till S."/>
            <person name="Granat S."/>
            <person name="Shohdy N."/>
            <person name="Hasegawa A."/>
            <person name="Hameed A."/>
            <person name="Lodhi M."/>
            <person name="Johnson A."/>
            <person name="Chen E."/>
            <person name="Marra M.A."/>
            <person name="Martienssen R."/>
            <person name="McCombie W.R."/>
        </authorList>
    </citation>
    <scope>NUCLEOTIDE SEQUENCE [LARGE SCALE GENOMIC DNA]</scope>
    <source>
        <strain>cv. Columbia</strain>
    </source>
</reference>
<reference key="3">
    <citation type="journal article" date="2017" name="Plant J.">
        <title>Araport11: a complete reannotation of the Arabidopsis thaliana reference genome.</title>
        <authorList>
            <person name="Cheng C.Y."/>
            <person name="Krishnakumar V."/>
            <person name="Chan A.P."/>
            <person name="Thibaud-Nissen F."/>
            <person name="Schobel S."/>
            <person name="Town C.D."/>
        </authorList>
    </citation>
    <scope>GENOME REANNOTATION</scope>
    <source>
        <strain>cv. Columbia</strain>
    </source>
</reference>
<reference key="4">
    <citation type="journal article" date="2004" name="Genome Res.">
        <title>Whole genome sequence comparisons and 'full-length' cDNA sequences: a combined approach to evaluate and improve Arabidopsis genome annotation.</title>
        <authorList>
            <person name="Castelli V."/>
            <person name="Aury J.-M."/>
            <person name="Jaillon O."/>
            <person name="Wincker P."/>
            <person name="Clepet C."/>
            <person name="Menard M."/>
            <person name="Cruaud C."/>
            <person name="Quetier F."/>
            <person name="Scarpelli C."/>
            <person name="Schaechter V."/>
            <person name="Temple G."/>
            <person name="Caboche M."/>
            <person name="Weissenbach J."/>
            <person name="Salanoubat M."/>
        </authorList>
    </citation>
    <scope>NUCLEOTIDE SEQUENCE [LARGE SCALE MRNA] OF 1153-1295</scope>
    <source>
        <strain>cv. Columbia</strain>
    </source>
</reference>
<protein>
    <recommendedName>
        <fullName>DNA (cytosine-5)-methyltransferase CMT2</fullName>
        <ecNumber>2.1.1.37</ecNumber>
    </recommendedName>
    <alternativeName>
        <fullName>Chromomethylase 2</fullName>
    </alternativeName>
    <alternativeName>
        <fullName>Protein CHROMOMETHYLASE 2</fullName>
    </alternativeName>
</protein>
<dbReference type="EC" id="2.1.1.37"/>
<dbReference type="EMBL" id="AF383171">
    <property type="protein sequence ID" value="AAK69757.1"/>
    <property type="status" value="ALT_SEQ"/>
    <property type="molecule type" value="Genomic_DNA"/>
</dbReference>
<dbReference type="EMBL" id="AL021711">
    <property type="protein sequence ID" value="CAA16759.1"/>
    <property type="status" value="ALT_SEQ"/>
    <property type="molecule type" value="Genomic_DNA"/>
</dbReference>
<dbReference type="EMBL" id="AL161549">
    <property type="protein sequence ID" value="CAB78904.1"/>
    <property type="status" value="ALT_SEQ"/>
    <property type="molecule type" value="Genomic_DNA"/>
</dbReference>
<dbReference type="EMBL" id="CP002687">
    <property type="protein sequence ID" value="AEE84126.1"/>
    <property type="molecule type" value="Genomic_DNA"/>
</dbReference>
<dbReference type="EMBL" id="BX828439">
    <property type="status" value="NOT_ANNOTATED_CDS"/>
    <property type="molecule type" value="mRNA"/>
</dbReference>
<dbReference type="PIR" id="T05039">
    <property type="entry name" value="T05039"/>
</dbReference>
<dbReference type="RefSeq" id="NP_193637.2">
    <property type="nucleotide sequence ID" value="NM_118020.5"/>
</dbReference>
<dbReference type="SMR" id="Q94F87"/>
<dbReference type="BioGRID" id="12933">
    <property type="interactions" value="3"/>
</dbReference>
<dbReference type="DIP" id="DIP-60718N"/>
<dbReference type="FunCoup" id="Q94F87">
    <property type="interactions" value="276"/>
</dbReference>
<dbReference type="STRING" id="3702.Q94F87"/>
<dbReference type="REBASE" id="3168">
    <property type="entry name" value="M.AthCMT2"/>
</dbReference>
<dbReference type="iPTMnet" id="Q94F87"/>
<dbReference type="PaxDb" id="3702-AT4G19020.1"/>
<dbReference type="ProteomicsDB" id="220476"/>
<dbReference type="EnsemblPlants" id="AT4G19020.1">
    <property type="protein sequence ID" value="AT4G19020.1"/>
    <property type="gene ID" value="AT4G19020"/>
</dbReference>
<dbReference type="GeneID" id="827640"/>
<dbReference type="Gramene" id="AT4G19020.1">
    <property type="protein sequence ID" value="AT4G19020.1"/>
    <property type="gene ID" value="AT4G19020"/>
</dbReference>
<dbReference type="KEGG" id="ath:AT4G19020"/>
<dbReference type="Araport" id="AT4G19020"/>
<dbReference type="TAIR" id="AT4G19020">
    <property type="gene designation" value="CMT2"/>
</dbReference>
<dbReference type="eggNOG" id="ENOG502QW29">
    <property type="taxonomic scope" value="Eukaryota"/>
</dbReference>
<dbReference type="HOGENOM" id="CLU_004921_1_0_1"/>
<dbReference type="InParanoid" id="Q94F87"/>
<dbReference type="PhylomeDB" id="Q94F87"/>
<dbReference type="PRO" id="PR:Q94F87"/>
<dbReference type="Proteomes" id="UP000006548">
    <property type="component" value="Chromosome 4"/>
</dbReference>
<dbReference type="ExpressionAtlas" id="Q94F87">
    <property type="expression patterns" value="baseline and differential"/>
</dbReference>
<dbReference type="GO" id="GO:0005634">
    <property type="term" value="C:nucleus"/>
    <property type="evidence" value="ECO:0007669"/>
    <property type="project" value="UniProtKB-SubCell"/>
</dbReference>
<dbReference type="GO" id="GO:0003682">
    <property type="term" value="F:chromatin binding"/>
    <property type="evidence" value="ECO:0007669"/>
    <property type="project" value="InterPro"/>
</dbReference>
<dbReference type="GO" id="GO:0003886">
    <property type="term" value="F:DNA (cytosine-5-)-methyltransferase activity"/>
    <property type="evidence" value="ECO:0000315"/>
    <property type="project" value="TAIR"/>
</dbReference>
<dbReference type="GO" id="GO:0003677">
    <property type="term" value="F:DNA binding"/>
    <property type="evidence" value="ECO:0007669"/>
    <property type="project" value="UniProtKB-KW"/>
</dbReference>
<dbReference type="GO" id="GO:0032183">
    <property type="term" value="F:SUMO binding"/>
    <property type="evidence" value="ECO:0000353"/>
    <property type="project" value="TAIR"/>
</dbReference>
<dbReference type="GO" id="GO:0034605">
    <property type="term" value="P:cellular response to heat"/>
    <property type="evidence" value="ECO:0000315"/>
    <property type="project" value="TAIR"/>
</dbReference>
<dbReference type="GO" id="GO:0006346">
    <property type="term" value="P:DNA methylation-dependent constitutive heterochromatin formation"/>
    <property type="evidence" value="ECO:0007669"/>
    <property type="project" value="InterPro"/>
</dbReference>
<dbReference type="GO" id="GO:0032259">
    <property type="term" value="P:methylation"/>
    <property type="evidence" value="ECO:0007669"/>
    <property type="project" value="UniProtKB-KW"/>
</dbReference>
<dbReference type="CDD" id="cd04716">
    <property type="entry name" value="BAH_plantDCM_I"/>
    <property type="match status" value="1"/>
</dbReference>
<dbReference type="CDD" id="cd18635">
    <property type="entry name" value="CD_CMT3_like"/>
    <property type="match status" value="1"/>
</dbReference>
<dbReference type="FunFam" id="2.30.30.490:FF:000011">
    <property type="entry name" value="DNA (cytosine-5)-methyltransferase 1"/>
    <property type="match status" value="1"/>
</dbReference>
<dbReference type="FunFam" id="3.90.120.10:FF:000003">
    <property type="entry name" value="DNA (cytosine-5)-methyltransferase 1"/>
    <property type="match status" value="1"/>
</dbReference>
<dbReference type="FunFam" id="3.40.50.150:FF:000464">
    <property type="entry name" value="DNA (Cytosine-5)-methyltransferase CMT2"/>
    <property type="match status" value="1"/>
</dbReference>
<dbReference type="FunFam" id="3.40.50.150:FF:000523">
    <property type="entry name" value="DNA (cytosine-5)-methyltransferase CMT2"/>
    <property type="match status" value="1"/>
</dbReference>
<dbReference type="Gene3D" id="2.30.30.490">
    <property type="match status" value="1"/>
</dbReference>
<dbReference type="Gene3D" id="3.90.120.10">
    <property type="entry name" value="DNA Methylase, subunit A, domain 2"/>
    <property type="match status" value="1"/>
</dbReference>
<dbReference type="Gene3D" id="3.40.50.150">
    <property type="entry name" value="Vaccinia Virus protein VP39"/>
    <property type="match status" value="2"/>
</dbReference>
<dbReference type="InterPro" id="IPR001025">
    <property type="entry name" value="BAH_dom"/>
</dbReference>
<dbReference type="InterPro" id="IPR043151">
    <property type="entry name" value="BAH_sf"/>
</dbReference>
<dbReference type="InterPro" id="IPR050390">
    <property type="entry name" value="C5-Methyltransferase"/>
</dbReference>
<dbReference type="InterPro" id="IPR001525">
    <property type="entry name" value="C5_MeTfrase"/>
</dbReference>
<dbReference type="InterPro" id="IPR016197">
    <property type="entry name" value="Chromo-like_dom_sf"/>
</dbReference>
<dbReference type="InterPro" id="IPR000953">
    <property type="entry name" value="Chromo/chromo_shadow_dom"/>
</dbReference>
<dbReference type="InterPro" id="IPR023780">
    <property type="entry name" value="Chromo_domain"/>
</dbReference>
<dbReference type="InterPro" id="IPR017198">
    <property type="entry name" value="DNMT1-like"/>
</dbReference>
<dbReference type="InterPro" id="IPR029063">
    <property type="entry name" value="SAM-dependent_MTases_sf"/>
</dbReference>
<dbReference type="PANTHER" id="PTHR10629">
    <property type="entry name" value="CYTOSINE-SPECIFIC METHYLTRANSFERASE"/>
    <property type="match status" value="1"/>
</dbReference>
<dbReference type="PANTHER" id="PTHR10629:SF34">
    <property type="entry name" value="DNA (CYTOSINE-5)-METHYLTRANSFERASE CMT2"/>
    <property type="match status" value="1"/>
</dbReference>
<dbReference type="Pfam" id="PF01426">
    <property type="entry name" value="BAH"/>
    <property type="match status" value="1"/>
</dbReference>
<dbReference type="Pfam" id="PF00385">
    <property type="entry name" value="Chromo"/>
    <property type="match status" value="1"/>
</dbReference>
<dbReference type="Pfam" id="PF00145">
    <property type="entry name" value="DNA_methylase"/>
    <property type="match status" value="1"/>
</dbReference>
<dbReference type="PIRSF" id="PIRSF037404">
    <property type="entry name" value="DNMT1"/>
    <property type="match status" value="1"/>
</dbReference>
<dbReference type="PRINTS" id="PR00105">
    <property type="entry name" value="C5METTRFRASE"/>
</dbReference>
<dbReference type="SMART" id="SM00439">
    <property type="entry name" value="BAH"/>
    <property type="match status" value="1"/>
</dbReference>
<dbReference type="SMART" id="SM00298">
    <property type="entry name" value="CHROMO"/>
    <property type="match status" value="1"/>
</dbReference>
<dbReference type="SUPFAM" id="SSF54160">
    <property type="entry name" value="Chromo domain-like"/>
    <property type="match status" value="1"/>
</dbReference>
<dbReference type="SUPFAM" id="SSF53335">
    <property type="entry name" value="S-adenosyl-L-methionine-dependent methyltransferases"/>
    <property type="match status" value="1"/>
</dbReference>
<dbReference type="PROSITE" id="PS51038">
    <property type="entry name" value="BAH"/>
    <property type="match status" value="1"/>
</dbReference>
<dbReference type="PROSITE" id="PS50013">
    <property type="entry name" value="CHROMO_2"/>
    <property type="match status" value="1"/>
</dbReference>
<dbReference type="PROSITE" id="PS51679">
    <property type="entry name" value="SAM_MT_C5"/>
    <property type="match status" value="1"/>
</dbReference>
<feature type="chain" id="PRO_0000246692" description="DNA (cytosine-5)-methyltransferase CMT2">
    <location>
        <begin position="1"/>
        <end position="1295"/>
    </location>
</feature>
<feature type="domain" description="BAH" evidence="3">
    <location>
        <begin position="578"/>
        <end position="693"/>
    </location>
</feature>
<feature type="domain" description="SAM-dependent MTase C5-type" evidence="4">
    <location>
        <begin position="727"/>
        <end position="1268"/>
    </location>
</feature>
<feature type="domain" description="Chromo" evidence="2">
    <location>
        <begin position="837"/>
        <end position="902"/>
    </location>
</feature>
<feature type="region of interest" description="Disordered" evidence="5">
    <location>
        <begin position="1"/>
        <end position="23"/>
    </location>
</feature>
<feature type="region of interest" description="Disordered" evidence="5">
    <location>
        <begin position="61"/>
        <end position="91"/>
    </location>
</feature>
<feature type="region of interest" description="Disordered" evidence="5">
    <location>
        <begin position="249"/>
        <end position="287"/>
    </location>
</feature>
<feature type="region of interest" description="Disordered" evidence="5">
    <location>
        <begin position="814"/>
        <end position="835"/>
    </location>
</feature>
<feature type="compositionally biased region" description="Polar residues" evidence="5">
    <location>
        <begin position="61"/>
        <end position="72"/>
    </location>
</feature>
<feature type="active site" evidence="4">
    <location>
        <position position="915"/>
    </location>
</feature>
<feature type="sequence conflict" description="In Ref. 1; AAK69757." evidence="6" ref="1">
    <original>DN</original>
    <variation>ND</variation>
    <location>
        <begin position="54"/>
        <end position="55"/>
    </location>
</feature>
<feature type="sequence conflict" description="In Ref. 1; AAK69757." evidence="6" ref="1">
    <original>AL</original>
    <variation>PV</variation>
    <location>
        <begin position="110"/>
        <end position="111"/>
    </location>
</feature>
<feature type="sequence conflict" description="In Ref. 1; AAK69757." evidence="6" ref="1">
    <original>K</original>
    <variation>E</variation>
    <location>
        <position position="125"/>
    </location>
</feature>
<feature type="sequence conflict" description="In Ref. 1; AAK69757." evidence="6" ref="1">
    <original>KF</original>
    <variation>NS</variation>
    <location>
        <begin position="132"/>
        <end position="133"/>
    </location>
</feature>
<feature type="sequence conflict" description="In Ref. 1; AAK69757." evidence="6" ref="1">
    <original>F</original>
    <variation>S</variation>
    <location>
        <position position="156"/>
    </location>
</feature>
<feature type="sequence conflict" description="In Ref. 1; AAK69757." evidence="6" ref="1">
    <original>R</original>
    <variation>K</variation>
    <location>
        <position position="229"/>
    </location>
</feature>
<feature type="sequence conflict" description="In Ref. 1; AAK69757." evidence="6" ref="1">
    <original>K</original>
    <variation>N</variation>
    <location>
        <position position="340"/>
    </location>
</feature>
<feature type="sequence conflict" description="In Ref. 1; AAK69757." evidence="6" ref="1">
    <original>K</original>
    <variation>N</variation>
    <location>
        <position position="501"/>
    </location>
</feature>
<feature type="sequence conflict" description="In Ref. 1; AAK69757." evidence="6" ref="1">
    <original>V</original>
    <variation>A</variation>
    <location>
        <position position="665"/>
    </location>
</feature>
<feature type="sequence conflict" description="In Ref. 1; AAK69757." evidence="6" ref="1">
    <original>C</original>
    <variation>W</variation>
    <location>
        <position position="705"/>
    </location>
</feature>
<feature type="sequence conflict" description="In Ref. 1; AAK69757." evidence="6" ref="1">
    <original>G</original>
    <variation>E</variation>
    <location>
        <position position="823"/>
    </location>
</feature>
<feature type="sequence conflict" description="In Ref. 1; AAK69757." evidence="6" ref="1">
    <original>H</original>
    <variation>P</variation>
    <location>
        <position position="850"/>
    </location>
</feature>
<feature type="sequence conflict" description="In Ref. 1; AAK69757." evidence="6" ref="1">
    <original>K</original>
    <variation>N</variation>
    <location>
        <position position="1132"/>
    </location>
</feature>
<feature type="sequence conflict" description="In Ref. 1; AAK69757." evidence="6" ref="1">
    <original>L</original>
    <variation>I</variation>
    <location>
        <position position="1144"/>
    </location>
</feature>
<organism>
    <name type="scientific">Arabidopsis thaliana</name>
    <name type="common">Mouse-ear cress</name>
    <dbReference type="NCBI Taxonomy" id="3702"/>
    <lineage>
        <taxon>Eukaryota</taxon>
        <taxon>Viridiplantae</taxon>
        <taxon>Streptophyta</taxon>
        <taxon>Embryophyta</taxon>
        <taxon>Tracheophyta</taxon>
        <taxon>Spermatophyta</taxon>
        <taxon>Magnoliopsida</taxon>
        <taxon>eudicotyledons</taxon>
        <taxon>Gunneridae</taxon>
        <taxon>Pentapetalae</taxon>
        <taxon>rosids</taxon>
        <taxon>malvids</taxon>
        <taxon>Brassicales</taxon>
        <taxon>Brassicaceae</taxon>
        <taxon>Camelineae</taxon>
        <taxon>Arabidopsis</taxon>
    </lineage>
</organism>
<gene>
    <name type="primary">CMT2</name>
    <name type="ordered locus">At4g19020</name>
    <name type="ORF">F13C5.190</name>
</gene>
<sequence>MLSPAKCESEEAQAPLDLHSSSRSEPECLSLVLWCPNPEEAAPSSTRELIKLPDNGEMSLRRSTTLNCNSPEENGGEGRVSQRKSSRGKSQPLLMLTNGCQLRRSPRFRALHANFDNVCSVPVTKGGVSQRKFSRGKSQPLLTLTNGCQLRRSPRFRAVDGNFDSVCSVPVTGKFGSRKRKSNSALDKKESSDSEGLTFKDIAVIAKSLEMEIISECQYKNNVAEGRSRLQDPAKRKVDSDTLLYSSINSSKQSLGSNKRMRRSQRFMKGTENEGEENLGKSKGKGMSLASCSFRRSTRLSGTVETGNTETLNRRKDCGPALCGAEQVRGTERLVQISKKDHCCEAMKKCEGDGLVSSKQELLVFPSGCIKKTVNGCRDRTLGKPRSSGLNTDDIHTSSLKISKNDTSNGLTMTTALVEQDAMESLLQGKTSACGAADKGKTREMHVNSTVIYLSDSDEPSSIEYLNGDNLTQVESGSALSSGGNEGIVSLDLNNPTKSTKRKGKRVTRTAVQEQNKRSICFFIGEPLSCEEAQERWRWRYELKERKSKSRGQQSEDDEDKIVANVECHYSQAKVDGHTFSLGDFAYIKGEEEETHVGQIVEFFKTTDGESYFRVQWFYRATDTIMERQATNHDKRRLFYSTVMNDNPVDCLISKVTVLQVSPRVGLKPNSIKSDYYFDMEYCVEYSTFQTLRNPKTSENKLECCADVVPTESTESILKKKSFSGELPVLDLYSGCGGMSTGLSLGAKISGVDVVTKWAVDQNTAACKSLKLNHPNTQVRNDAAGDFLQLLKEWDKLCKRYVFNNDQRTDTLRSVNSTKETSGSSSSSDDDSDSEEYEVEKLVDICFGDHDKTGKNGLKFKVHWKGYRSDEDTWELAEELSNCQDAIREFVTSGFKSKILPLPGRVGVICGGPPCQGISGYNRHRNVDSPLNDERNQQIIVFMDIVEYLKPSYVLMENVVDILRMDKGSLGRYALSRLVNMRYQARLGIMTAGCYGLSQFRSRVFMWGAVPNKNLPPFPLPTHDVIVRYGLPLEFERNVVAYAEGQPRKLEKALVLKDAISDLPHVSNDEDREKLPYESLPKTDFQRYIRSTKRDLTGSAIDNCNKRTMLLHDHRPFHINEDDYARVCQIPKRKGANFRDLPGLIVRNNTVCRDPSMEPVILPSGKPLVPGYVFTFQQGKSKRPFARLWWDETVPTVLTVPTCHSQALLHPEQDRVLTIRESARLQGFPDYFQFCGTIKERYCQIGNAVAVSVSRALGYSLGMAFRGLARDEHLIKLPQNFSHSTYPQLQETIPH</sequence>
<proteinExistence type="evidence at transcript level"/>
<comment type="function">
    <text evidence="1">May be involved in the CpXpG methylation and in gene silencing.</text>
</comment>
<comment type="catalytic activity">
    <reaction>
        <text>a 2'-deoxycytidine in DNA + S-adenosyl-L-methionine = a 5-methyl-2'-deoxycytidine in DNA + S-adenosyl-L-homocysteine + H(+)</text>
        <dbReference type="Rhea" id="RHEA:13681"/>
        <dbReference type="Rhea" id="RHEA-COMP:11369"/>
        <dbReference type="Rhea" id="RHEA-COMP:11370"/>
        <dbReference type="ChEBI" id="CHEBI:15378"/>
        <dbReference type="ChEBI" id="CHEBI:57856"/>
        <dbReference type="ChEBI" id="CHEBI:59789"/>
        <dbReference type="ChEBI" id="CHEBI:85452"/>
        <dbReference type="ChEBI" id="CHEBI:85454"/>
        <dbReference type="EC" id="2.1.1.37"/>
    </reaction>
</comment>
<comment type="subcellular location">
    <subcellularLocation>
        <location evidence="1">Nucleus</location>
    </subcellularLocation>
</comment>
<comment type="similarity">
    <text evidence="4">Belongs to the class I-like SAM-binding methyltransferase superfamily. C5-methyltransferase family.</text>
</comment>
<comment type="sequence caution" evidence="6">
    <conflict type="erroneous gene model prediction">
        <sequence resource="EMBL-CDS" id="AAK69757"/>
    </conflict>
</comment>
<comment type="sequence caution" evidence="6">
    <conflict type="erroneous termination">
        <sequence resource="EMBL" id="BX828439"/>
    </conflict>
    <text>Truncated C-terminus.</text>
</comment>
<comment type="sequence caution" evidence="6">
    <conflict type="erroneous gene model prediction">
        <sequence resource="EMBL-CDS" id="CAA16759"/>
    </conflict>
</comment>
<comment type="sequence caution" evidence="6">
    <conflict type="erroneous gene model prediction">
        <sequence resource="EMBL-CDS" id="CAB78904"/>
    </conflict>
</comment>
<keyword id="KW-0156">Chromatin regulator</keyword>
<keyword id="KW-0238">DNA-binding</keyword>
<keyword id="KW-0489">Methyltransferase</keyword>
<keyword id="KW-0539">Nucleus</keyword>
<keyword id="KW-1185">Reference proteome</keyword>
<keyword id="KW-0949">S-adenosyl-L-methionine</keyword>
<keyword id="KW-0804">Transcription</keyword>
<keyword id="KW-0805">Transcription regulation</keyword>
<keyword id="KW-0808">Transferase</keyword>